<organism>
    <name type="scientific">Tupiella akineta</name>
    <name type="common">Green alga</name>
    <name type="synonym">Pseudendoclonium akinetum</name>
    <dbReference type="NCBI Taxonomy" id="160070"/>
    <lineage>
        <taxon>Eukaryota</taxon>
        <taxon>Viridiplantae</taxon>
        <taxon>Chlorophyta</taxon>
        <taxon>Ulvophyceae</taxon>
        <taxon>OUU clade</taxon>
        <taxon>Ulotrichales</taxon>
        <taxon>Tupiellaceae</taxon>
        <taxon>Tupiella</taxon>
    </lineage>
</organism>
<keyword id="KW-0150">Chloroplast</keyword>
<keyword id="KW-0251">Elongation factor</keyword>
<keyword id="KW-0342">GTP-binding</keyword>
<keyword id="KW-0378">Hydrolase</keyword>
<keyword id="KW-0460">Magnesium</keyword>
<keyword id="KW-0479">Metal-binding</keyword>
<keyword id="KW-0547">Nucleotide-binding</keyword>
<keyword id="KW-0934">Plastid</keyword>
<keyword id="KW-0648">Protein biosynthesis</keyword>
<gene>
    <name type="primary">tufA</name>
</gene>
<feature type="chain" id="PRO_0000275379" description="Elongation factor Tu, chloroplastic">
    <location>
        <begin position="1"/>
        <end position="409"/>
    </location>
</feature>
<feature type="domain" description="tr-type G">
    <location>
        <begin position="10"/>
        <end position="214"/>
    </location>
</feature>
<feature type="region of interest" description="G1" evidence="1">
    <location>
        <begin position="19"/>
        <end position="26"/>
    </location>
</feature>
<feature type="region of interest" description="G2" evidence="1">
    <location>
        <begin position="60"/>
        <end position="64"/>
    </location>
</feature>
<feature type="region of interest" description="G3" evidence="1">
    <location>
        <begin position="81"/>
        <end position="84"/>
    </location>
</feature>
<feature type="region of interest" description="G4" evidence="1">
    <location>
        <begin position="136"/>
        <end position="139"/>
    </location>
</feature>
<feature type="region of interest" description="G5" evidence="1">
    <location>
        <begin position="174"/>
        <end position="176"/>
    </location>
</feature>
<feature type="binding site" evidence="1">
    <location>
        <begin position="19"/>
        <end position="26"/>
    </location>
    <ligand>
        <name>GTP</name>
        <dbReference type="ChEBI" id="CHEBI:37565"/>
    </ligand>
</feature>
<feature type="binding site" evidence="2">
    <location>
        <position position="26"/>
    </location>
    <ligand>
        <name>Mg(2+)</name>
        <dbReference type="ChEBI" id="CHEBI:18420"/>
    </ligand>
</feature>
<feature type="binding site" evidence="1">
    <location>
        <begin position="81"/>
        <end position="85"/>
    </location>
    <ligand>
        <name>GTP</name>
        <dbReference type="ChEBI" id="CHEBI:37565"/>
    </ligand>
</feature>
<feature type="binding site" evidence="1">
    <location>
        <begin position="136"/>
        <end position="139"/>
    </location>
    <ligand>
        <name>GTP</name>
        <dbReference type="ChEBI" id="CHEBI:37565"/>
    </ligand>
</feature>
<name>EFTU_TUPAK</name>
<reference key="1">
    <citation type="journal article" date="2005" name="Mol. Biol. Evol.">
        <title>The chloroplast genome sequence of the green alga Pseudendoclonium akinetum (Ulvophyceae) reveals unusual structural features and new insights into the branching order of chlorophyte lineages.</title>
        <authorList>
            <person name="Pombert J.-F."/>
            <person name="Otis C."/>
            <person name="Lemieux C."/>
            <person name="Turmel M."/>
        </authorList>
    </citation>
    <scope>NUCLEOTIDE SEQUENCE [LARGE SCALE GENOMIC DNA]</scope>
    <source>
        <strain>UTEX 1912</strain>
    </source>
</reference>
<proteinExistence type="inferred from homology"/>
<accession>Q3ZJ24</accession>
<geneLocation type="chloroplast"/>
<protein>
    <recommendedName>
        <fullName>Elongation factor Tu, chloroplastic</fullName>
        <shortName>EF-Tu</shortName>
        <ecNumber evidence="2">3.6.5.3</ecNumber>
    </recommendedName>
</protein>
<sequence length="409" mass="44808">MAREKFERKKQHVNIGTIGHVDHGKTTLTAAITMCLQSFSKNKGKRYDEIDSAPEEKARGITINTAHVEYETENRHYAHVDCPGHADYVKNMITGAAQMDGAILVVSGADGPMPQTKEHLLLAKQVGVPTLVVFLNKEDQVDDPELLELVELEVRETLDKYEYPGDDIPIIAGSALLALEALIENPNVKPGENEWVDKILKLMQNVDTYIPTPVRETDKTFLMAVEDVFSITGRGTVATGLVERGTLKTGATVEIIGLRDTTTTTVTGLEMFQKTLDETVAGDNVGVLLRGVQKDNIQRGMVLAAPGTIKPHTKFEAQVYILTKEEGGRHTPFFPGYRPQFYVRTTDVTGKIESFTADDGSEALMATSGDRLKMVVELIQPIAVENGMRFAIREGGRTVGAGVVSTILK</sequence>
<evidence type="ECO:0000250" key="1"/>
<evidence type="ECO:0000255" key="2">
    <source>
        <dbReference type="HAMAP-Rule" id="MF_00118"/>
    </source>
</evidence>
<evidence type="ECO:0000305" key="3"/>
<comment type="function">
    <text evidence="2">GTP hydrolase that promotes the GTP-dependent binding of aminoacyl-tRNA to the A-site of ribosomes during protein biosynthesis.</text>
</comment>
<comment type="catalytic activity">
    <reaction evidence="2">
        <text>GTP + H2O = GDP + phosphate + H(+)</text>
        <dbReference type="Rhea" id="RHEA:19669"/>
        <dbReference type="ChEBI" id="CHEBI:15377"/>
        <dbReference type="ChEBI" id="CHEBI:15378"/>
        <dbReference type="ChEBI" id="CHEBI:37565"/>
        <dbReference type="ChEBI" id="CHEBI:43474"/>
        <dbReference type="ChEBI" id="CHEBI:58189"/>
        <dbReference type="EC" id="3.6.5.3"/>
    </reaction>
    <physiologicalReaction direction="left-to-right" evidence="2">
        <dbReference type="Rhea" id="RHEA:19670"/>
    </physiologicalReaction>
</comment>
<comment type="subcellular location">
    <subcellularLocation>
        <location>Plastid</location>
        <location>Chloroplast</location>
    </subcellularLocation>
</comment>
<comment type="similarity">
    <text evidence="3">Belongs to the TRAFAC class translation factor GTPase superfamily. Classic translation factor GTPase family. EF-Tu/EF-1A subfamily.</text>
</comment>
<dbReference type="EC" id="3.6.5.3" evidence="2"/>
<dbReference type="EMBL" id="AY835431">
    <property type="protein sequence ID" value="AAV80665.1"/>
    <property type="molecule type" value="Genomic_DNA"/>
</dbReference>
<dbReference type="RefSeq" id="YP_636243.1">
    <property type="nucleotide sequence ID" value="NC_008114.1"/>
</dbReference>
<dbReference type="SMR" id="Q3ZJ24"/>
<dbReference type="GeneID" id="4108708"/>
<dbReference type="GO" id="GO:0009507">
    <property type="term" value="C:chloroplast"/>
    <property type="evidence" value="ECO:0007669"/>
    <property type="project" value="UniProtKB-SubCell"/>
</dbReference>
<dbReference type="GO" id="GO:0005739">
    <property type="term" value="C:mitochondrion"/>
    <property type="evidence" value="ECO:0007669"/>
    <property type="project" value="TreeGrafter"/>
</dbReference>
<dbReference type="GO" id="GO:0005525">
    <property type="term" value="F:GTP binding"/>
    <property type="evidence" value="ECO:0007669"/>
    <property type="project" value="UniProtKB-UniRule"/>
</dbReference>
<dbReference type="GO" id="GO:0003924">
    <property type="term" value="F:GTPase activity"/>
    <property type="evidence" value="ECO:0007669"/>
    <property type="project" value="InterPro"/>
</dbReference>
<dbReference type="GO" id="GO:0003746">
    <property type="term" value="F:translation elongation factor activity"/>
    <property type="evidence" value="ECO:0007669"/>
    <property type="project" value="UniProtKB-UniRule"/>
</dbReference>
<dbReference type="GO" id="GO:0070125">
    <property type="term" value="P:mitochondrial translational elongation"/>
    <property type="evidence" value="ECO:0007669"/>
    <property type="project" value="TreeGrafter"/>
</dbReference>
<dbReference type="CDD" id="cd01884">
    <property type="entry name" value="EF_Tu"/>
    <property type="match status" value="1"/>
</dbReference>
<dbReference type="CDD" id="cd03697">
    <property type="entry name" value="EFTU_II"/>
    <property type="match status" value="1"/>
</dbReference>
<dbReference type="CDD" id="cd03707">
    <property type="entry name" value="EFTU_III"/>
    <property type="match status" value="1"/>
</dbReference>
<dbReference type="FunFam" id="2.40.30.10:FF:000001">
    <property type="entry name" value="Elongation factor Tu"/>
    <property type="match status" value="1"/>
</dbReference>
<dbReference type="FunFam" id="2.40.30.10:FF:000046">
    <property type="entry name" value="Elongation factor Tu"/>
    <property type="match status" value="1"/>
</dbReference>
<dbReference type="FunFam" id="3.40.50.300:FF:000003">
    <property type="entry name" value="Elongation factor Tu"/>
    <property type="match status" value="1"/>
</dbReference>
<dbReference type="Gene3D" id="3.40.50.300">
    <property type="entry name" value="P-loop containing nucleotide triphosphate hydrolases"/>
    <property type="match status" value="1"/>
</dbReference>
<dbReference type="Gene3D" id="2.40.30.10">
    <property type="entry name" value="Translation factors"/>
    <property type="match status" value="2"/>
</dbReference>
<dbReference type="HAMAP" id="MF_00118_B">
    <property type="entry name" value="EF_Tu_B"/>
    <property type="match status" value="1"/>
</dbReference>
<dbReference type="InterPro" id="IPR041709">
    <property type="entry name" value="EF-Tu_GTP-bd"/>
</dbReference>
<dbReference type="InterPro" id="IPR050055">
    <property type="entry name" value="EF-Tu_GTPase"/>
</dbReference>
<dbReference type="InterPro" id="IPR004161">
    <property type="entry name" value="EFTu-like_2"/>
</dbReference>
<dbReference type="InterPro" id="IPR033720">
    <property type="entry name" value="EFTU_2"/>
</dbReference>
<dbReference type="InterPro" id="IPR031157">
    <property type="entry name" value="G_TR_CS"/>
</dbReference>
<dbReference type="InterPro" id="IPR027417">
    <property type="entry name" value="P-loop_NTPase"/>
</dbReference>
<dbReference type="InterPro" id="IPR005225">
    <property type="entry name" value="Small_GTP-bd"/>
</dbReference>
<dbReference type="InterPro" id="IPR000795">
    <property type="entry name" value="T_Tr_GTP-bd_dom"/>
</dbReference>
<dbReference type="InterPro" id="IPR009000">
    <property type="entry name" value="Transl_B-barrel_sf"/>
</dbReference>
<dbReference type="InterPro" id="IPR009001">
    <property type="entry name" value="Transl_elong_EF1A/Init_IF2_C"/>
</dbReference>
<dbReference type="InterPro" id="IPR004541">
    <property type="entry name" value="Transl_elong_EFTu/EF1A_bac/org"/>
</dbReference>
<dbReference type="InterPro" id="IPR004160">
    <property type="entry name" value="Transl_elong_EFTu/EF1A_C"/>
</dbReference>
<dbReference type="NCBIfam" id="TIGR00485">
    <property type="entry name" value="EF-Tu"/>
    <property type="match status" value="1"/>
</dbReference>
<dbReference type="NCBIfam" id="NF000766">
    <property type="entry name" value="PRK00049.1"/>
    <property type="match status" value="1"/>
</dbReference>
<dbReference type="NCBIfam" id="NF009372">
    <property type="entry name" value="PRK12735.1"/>
    <property type="match status" value="1"/>
</dbReference>
<dbReference type="NCBIfam" id="NF009373">
    <property type="entry name" value="PRK12736.1"/>
    <property type="match status" value="1"/>
</dbReference>
<dbReference type="NCBIfam" id="TIGR00231">
    <property type="entry name" value="small_GTP"/>
    <property type="match status" value="1"/>
</dbReference>
<dbReference type="PANTHER" id="PTHR43721:SF5">
    <property type="entry name" value="ELONGATION FACTOR TU, CHLOROPLASTIC"/>
    <property type="match status" value="1"/>
</dbReference>
<dbReference type="PANTHER" id="PTHR43721">
    <property type="entry name" value="ELONGATION FACTOR TU-RELATED"/>
    <property type="match status" value="1"/>
</dbReference>
<dbReference type="Pfam" id="PF00009">
    <property type="entry name" value="GTP_EFTU"/>
    <property type="match status" value="1"/>
</dbReference>
<dbReference type="Pfam" id="PF03144">
    <property type="entry name" value="GTP_EFTU_D2"/>
    <property type="match status" value="1"/>
</dbReference>
<dbReference type="Pfam" id="PF03143">
    <property type="entry name" value="GTP_EFTU_D3"/>
    <property type="match status" value="1"/>
</dbReference>
<dbReference type="PRINTS" id="PR00315">
    <property type="entry name" value="ELONGATNFCT"/>
</dbReference>
<dbReference type="SUPFAM" id="SSF50465">
    <property type="entry name" value="EF-Tu/eEF-1alpha/eIF2-gamma C-terminal domain"/>
    <property type="match status" value="1"/>
</dbReference>
<dbReference type="SUPFAM" id="SSF52540">
    <property type="entry name" value="P-loop containing nucleoside triphosphate hydrolases"/>
    <property type="match status" value="1"/>
</dbReference>
<dbReference type="SUPFAM" id="SSF50447">
    <property type="entry name" value="Translation proteins"/>
    <property type="match status" value="1"/>
</dbReference>
<dbReference type="PROSITE" id="PS00301">
    <property type="entry name" value="G_TR_1"/>
    <property type="match status" value="1"/>
</dbReference>
<dbReference type="PROSITE" id="PS51722">
    <property type="entry name" value="G_TR_2"/>
    <property type="match status" value="1"/>
</dbReference>